<name>STRR_STRGR</name>
<dbReference type="EMBL" id="Y00459">
    <property type="protein sequence ID" value="CAA68515.1"/>
    <property type="molecule type" value="Genomic_DNA"/>
</dbReference>
<dbReference type="PIR" id="C26984">
    <property type="entry name" value="C26984"/>
</dbReference>
<dbReference type="RefSeq" id="WP_012381619.1">
    <property type="nucleotide sequence ID" value="NZ_BAABSR010000033.1"/>
</dbReference>
<dbReference type="SMR" id="P08076"/>
<dbReference type="OMA" id="VEANITH"/>
<dbReference type="OrthoDB" id="3701787at2"/>
<dbReference type="GO" id="GO:0019872">
    <property type="term" value="P:streptomycin biosynthetic process"/>
    <property type="evidence" value="ECO:0007669"/>
    <property type="project" value="UniProtKB-KW"/>
</dbReference>
<dbReference type="CDD" id="cd16387">
    <property type="entry name" value="ParB_N_Srx"/>
    <property type="match status" value="1"/>
</dbReference>
<dbReference type="Gene3D" id="3.90.1530.10">
    <property type="entry name" value="Conserved hypothetical protein from pyrococcus furiosus pfu- 392566-001, ParB domain"/>
    <property type="match status" value="1"/>
</dbReference>
<dbReference type="Gene3D" id="1.10.10.10">
    <property type="entry name" value="Winged helix-like DNA-binding domain superfamily/Winged helix DNA-binding domain"/>
    <property type="match status" value="1"/>
</dbReference>
<dbReference type="InterPro" id="IPR003115">
    <property type="entry name" value="ParB/Sulfiredoxin_dom"/>
</dbReference>
<dbReference type="InterPro" id="IPR036086">
    <property type="entry name" value="ParB/Sulfiredoxin_sf"/>
</dbReference>
<dbReference type="InterPro" id="IPR036388">
    <property type="entry name" value="WH-like_DNA-bd_sf"/>
</dbReference>
<dbReference type="Pfam" id="PF02195">
    <property type="entry name" value="ParBc"/>
    <property type="match status" value="1"/>
</dbReference>
<dbReference type="SMART" id="SM00470">
    <property type="entry name" value="ParB"/>
    <property type="match status" value="1"/>
</dbReference>
<dbReference type="SUPFAM" id="SSF110849">
    <property type="entry name" value="ParB/Sulfiredoxin"/>
    <property type="match status" value="1"/>
</dbReference>
<feature type="chain" id="PRO_0000072288" description="Streptomycin biosynthesis operon possible regulatory protein">
    <location>
        <begin position="1"/>
        <end position="350"/>
    </location>
</feature>
<feature type="region of interest" description="Disordered" evidence="1">
    <location>
        <begin position="1"/>
        <end position="20"/>
    </location>
</feature>
<feature type="region of interest" description="Disordered" evidence="1">
    <location>
        <begin position="168"/>
        <end position="189"/>
    </location>
</feature>
<feature type="region of interest" description="Disordered" evidence="1">
    <location>
        <begin position="211"/>
        <end position="258"/>
    </location>
</feature>
<feature type="compositionally biased region" description="Polar residues" evidence="1">
    <location>
        <begin position="1"/>
        <end position="10"/>
    </location>
</feature>
<feature type="compositionally biased region" description="Basic and acidic residues" evidence="1">
    <location>
        <begin position="177"/>
        <end position="189"/>
    </location>
</feature>
<feature type="compositionally biased region" description="Basic and acidic residues" evidence="1">
    <location>
        <begin position="223"/>
        <end position="242"/>
    </location>
</feature>
<sequence>MEHISGNSPEQVRERSAAVTGAVEESELKLSAVTMVPVESLLPSDSPRSAGEDVEHIRTLAASGAELPAIVVMPTTKRVIDGMHRLRATKMRGATEIAVRYFEGGEEEAFIFAVKSNVTHGLPLSLDDRKAAATRVLETHPSWSDRAIGLATGLSAKTVGTLRSCSTAGVPQSNVRIGRDGRARPLDPTEGRKLASRLLQENPSASLRQIAAQAGVSPSTASDVRKRLSRGESPLPERDRQQEVPAVARTPARVSRADGSWAPHTVALRHLSRDPSVRLTEDGRALLRWLNVVAVRNQDWDRLLGNVPPHCVKVIAELARGCADIWHRVAEELDQAGIDEAAGRSLSDVG</sequence>
<accession>P08076</accession>
<reference key="1">
    <citation type="journal article" date="1987" name="Nucleic Acids Res.">
        <title>Gene cluster for streptomycin biosynthesis in Streptomyces griseus: nucleotide sequence of three genes and analysis of transcriptional activity.</title>
        <authorList>
            <person name="Distler J."/>
            <person name="Ebert A."/>
            <person name="Mansouri K."/>
            <person name="Pissowotzki K."/>
            <person name="Stockmann M."/>
            <person name="Piepersberg W."/>
        </authorList>
    </citation>
    <scope>NUCLEOTIDE SEQUENCE [GENOMIC DNA]</scope>
    <source>
        <strain>N2-3-11</strain>
    </source>
</reference>
<keyword id="KW-0045">Antibiotic biosynthesis</keyword>
<keyword id="KW-0759">Streptomycin biosynthesis</keyword>
<keyword id="KW-0804">Transcription</keyword>
<keyword id="KW-0805">Transcription regulation</keyword>
<organism>
    <name type="scientific">Streptomyces griseus</name>
    <dbReference type="NCBI Taxonomy" id="1911"/>
    <lineage>
        <taxon>Bacteria</taxon>
        <taxon>Bacillati</taxon>
        <taxon>Actinomycetota</taxon>
        <taxon>Actinomycetes</taxon>
        <taxon>Kitasatosporales</taxon>
        <taxon>Streptomycetaceae</taxon>
        <taxon>Streptomyces</taxon>
    </lineage>
</organism>
<proteinExistence type="predicted"/>
<evidence type="ECO:0000256" key="1">
    <source>
        <dbReference type="SAM" id="MobiDB-lite"/>
    </source>
</evidence>
<protein>
    <recommendedName>
        <fullName>Streptomycin biosynthesis operon possible regulatory protein</fullName>
    </recommendedName>
</protein>
<gene>
    <name type="primary">strR</name>
</gene>